<proteinExistence type="inferred from homology"/>
<dbReference type="EC" id="2.1.1.228"/>
<dbReference type="EMBL" id="AE009442">
    <property type="protein sequence ID" value="AAO27983.1"/>
    <property type="molecule type" value="Genomic_DNA"/>
</dbReference>
<dbReference type="RefSeq" id="WP_004087639.1">
    <property type="nucleotide sequence ID" value="NC_004556.1"/>
</dbReference>
<dbReference type="SMR" id="Q87F54"/>
<dbReference type="GeneID" id="93903774"/>
<dbReference type="KEGG" id="xft:PD_0083"/>
<dbReference type="HOGENOM" id="CLU_047363_0_1_6"/>
<dbReference type="Proteomes" id="UP000002516">
    <property type="component" value="Chromosome"/>
</dbReference>
<dbReference type="GO" id="GO:0005829">
    <property type="term" value="C:cytosol"/>
    <property type="evidence" value="ECO:0007669"/>
    <property type="project" value="TreeGrafter"/>
</dbReference>
<dbReference type="GO" id="GO:0052906">
    <property type="term" value="F:tRNA (guanine(37)-N1)-methyltransferase activity"/>
    <property type="evidence" value="ECO:0007669"/>
    <property type="project" value="UniProtKB-UniRule"/>
</dbReference>
<dbReference type="GO" id="GO:0002939">
    <property type="term" value="P:tRNA N1-guanine methylation"/>
    <property type="evidence" value="ECO:0007669"/>
    <property type="project" value="TreeGrafter"/>
</dbReference>
<dbReference type="CDD" id="cd18080">
    <property type="entry name" value="TrmD-like"/>
    <property type="match status" value="1"/>
</dbReference>
<dbReference type="FunFam" id="1.10.1270.20:FF:000001">
    <property type="entry name" value="tRNA (guanine-N(1)-)-methyltransferase"/>
    <property type="match status" value="1"/>
</dbReference>
<dbReference type="FunFam" id="3.40.1280.10:FF:000001">
    <property type="entry name" value="tRNA (guanine-N(1)-)-methyltransferase"/>
    <property type="match status" value="1"/>
</dbReference>
<dbReference type="Gene3D" id="3.40.1280.10">
    <property type="match status" value="1"/>
</dbReference>
<dbReference type="Gene3D" id="1.10.1270.20">
    <property type="entry name" value="tRNA(m1g37)methyltransferase, domain 2"/>
    <property type="match status" value="1"/>
</dbReference>
<dbReference type="HAMAP" id="MF_00605">
    <property type="entry name" value="TrmD"/>
    <property type="match status" value="1"/>
</dbReference>
<dbReference type="InterPro" id="IPR029028">
    <property type="entry name" value="Alpha/beta_knot_MTases"/>
</dbReference>
<dbReference type="InterPro" id="IPR023148">
    <property type="entry name" value="tRNA_m1G_MeTrfase_C_sf"/>
</dbReference>
<dbReference type="InterPro" id="IPR002649">
    <property type="entry name" value="tRNA_m1G_MeTrfase_TrmD"/>
</dbReference>
<dbReference type="InterPro" id="IPR029026">
    <property type="entry name" value="tRNA_m1G_MTases_N"/>
</dbReference>
<dbReference type="InterPro" id="IPR016009">
    <property type="entry name" value="tRNA_MeTrfase_TRMD/TRM10"/>
</dbReference>
<dbReference type="NCBIfam" id="NF000648">
    <property type="entry name" value="PRK00026.1"/>
    <property type="match status" value="1"/>
</dbReference>
<dbReference type="NCBIfam" id="TIGR00088">
    <property type="entry name" value="trmD"/>
    <property type="match status" value="1"/>
</dbReference>
<dbReference type="PANTHER" id="PTHR46417">
    <property type="entry name" value="TRNA (GUANINE-N(1)-)-METHYLTRANSFERASE"/>
    <property type="match status" value="1"/>
</dbReference>
<dbReference type="PANTHER" id="PTHR46417:SF1">
    <property type="entry name" value="TRNA (GUANINE-N(1)-)-METHYLTRANSFERASE"/>
    <property type="match status" value="1"/>
</dbReference>
<dbReference type="Pfam" id="PF01746">
    <property type="entry name" value="tRNA_m1G_MT"/>
    <property type="match status" value="1"/>
</dbReference>
<dbReference type="PIRSF" id="PIRSF000386">
    <property type="entry name" value="tRNA_mtase"/>
    <property type="match status" value="1"/>
</dbReference>
<dbReference type="SUPFAM" id="SSF75217">
    <property type="entry name" value="alpha/beta knot"/>
    <property type="match status" value="1"/>
</dbReference>
<reference key="1">
    <citation type="journal article" date="2003" name="J. Bacteriol.">
        <title>Comparative analyses of the complete genome sequences of Pierce's disease and citrus variegated chlorosis strains of Xylella fastidiosa.</title>
        <authorList>
            <person name="Van Sluys M.A."/>
            <person name="de Oliveira M.C."/>
            <person name="Monteiro-Vitorello C.B."/>
            <person name="Miyaki C.Y."/>
            <person name="Furlan L.R."/>
            <person name="Camargo L.E.A."/>
            <person name="da Silva A.C.R."/>
            <person name="Moon D.H."/>
            <person name="Takita M.A."/>
            <person name="Lemos E.G.M."/>
            <person name="Machado M.A."/>
            <person name="Ferro M.I.T."/>
            <person name="da Silva F.R."/>
            <person name="Goldman M.H.S."/>
            <person name="Goldman G.H."/>
            <person name="Lemos M.V.F."/>
            <person name="El-Dorry H."/>
            <person name="Tsai S.M."/>
            <person name="Carrer H."/>
            <person name="Carraro D.M."/>
            <person name="de Oliveira R.C."/>
            <person name="Nunes L.R."/>
            <person name="Siqueira W.J."/>
            <person name="Coutinho L.L."/>
            <person name="Kimura E.T."/>
            <person name="Ferro E.S."/>
            <person name="Harakava R."/>
            <person name="Kuramae E.E."/>
            <person name="Marino C.L."/>
            <person name="Giglioti E."/>
            <person name="Abreu I.L."/>
            <person name="Alves L.M.C."/>
            <person name="do Amaral A.M."/>
            <person name="Baia G.S."/>
            <person name="Blanco S.R."/>
            <person name="Brito M.S."/>
            <person name="Cannavan F.S."/>
            <person name="Celestino A.V."/>
            <person name="da Cunha A.F."/>
            <person name="Fenille R.C."/>
            <person name="Ferro J.A."/>
            <person name="Formighieri E.F."/>
            <person name="Kishi L.T."/>
            <person name="Leoni S.G."/>
            <person name="Oliveira A.R."/>
            <person name="Rosa V.E. Jr."/>
            <person name="Sassaki F.T."/>
            <person name="Sena J.A.D."/>
            <person name="de Souza A.A."/>
            <person name="Truffi D."/>
            <person name="Tsukumo F."/>
            <person name="Yanai G.M."/>
            <person name="Zaros L.G."/>
            <person name="Civerolo E.L."/>
            <person name="Simpson A.J.G."/>
            <person name="Almeida N.F. Jr."/>
            <person name="Setubal J.C."/>
            <person name="Kitajima J.P."/>
        </authorList>
    </citation>
    <scope>NUCLEOTIDE SEQUENCE [LARGE SCALE GENOMIC DNA]</scope>
    <source>
        <strain>Temecula1 / ATCC 700964</strain>
    </source>
</reference>
<gene>
    <name type="primary">trmD</name>
    <name type="ordered locus">PD_0083</name>
</gene>
<keyword id="KW-0963">Cytoplasm</keyword>
<keyword id="KW-0489">Methyltransferase</keyword>
<keyword id="KW-1185">Reference proteome</keyword>
<keyword id="KW-0949">S-adenosyl-L-methionine</keyword>
<keyword id="KW-0808">Transferase</keyword>
<keyword id="KW-0819">tRNA processing</keyword>
<name>TRMD_XYLFT</name>
<feature type="chain" id="PRO_0000060505" description="tRNA (guanine-N(1)-)-methyltransferase">
    <location>
        <begin position="1"/>
        <end position="261"/>
    </location>
</feature>
<feature type="binding site" evidence="1">
    <location>
        <position position="113"/>
    </location>
    <ligand>
        <name>S-adenosyl-L-methionine</name>
        <dbReference type="ChEBI" id="CHEBI:59789"/>
    </ligand>
</feature>
<feature type="binding site" evidence="1">
    <location>
        <begin position="133"/>
        <end position="138"/>
    </location>
    <ligand>
        <name>S-adenosyl-L-methionine</name>
        <dbReference type="ChEBI" id="CHEBI:59789"/>
    </ligand>
</feature>
<comment type="function">
    <text evidence="1">Specifically methylates guanosine-37 in various tRNAs.</text>
</comment>
<comment type="catalytic activity">
    <reaction>
        <text>guanosine(37) in tRNA + S-adenosyl-L-methionine = N(1)-methylguanosine(37) in tRNA + S-adenosyl-L-homocysteine + H(+)</text>
        <dbReference type="Rhea" id="RHEA:36899"/>
        <dbReference type="Rhea" id="RHEA-COMP:10145"/>
        <dbReference type="Rhea" id="RHEA-COMP:10147"/>
        <dbReference type="ChEBI" id="CHEBI:15378"/>
        <dbReference type="ChEBI" id="CHEBI:57856"/>
        <dbReference type="ChEBI" id="CHEBI:59789"/>
        <dbReference type="ChEBI" id="CHEBI:73542"/>
        <dbReference type="ChEBI" id="CHEBI:74269"/>
        <dbReference type="EC" id="2.1.1.228"/>
    </reaction>
</comment>
<comment type="subunit">
    <text evidence="1">Homodimer.</text>
</comment>
<comment type="subcellular location">
    <subcellularLocation>
        <location evidence="2">Cytoplasm</location>
    </subcellularLocation>
</comment>
<comment type="similarity">
    <text evidence="2">Belongs to the RNA methyltransferase TrmD family.</text>
</comment>
<evidence type="ECO:0000250" key="1"/>
<evidence type="ECO:0000305" key="2"/>
<sequence length="261" mass="29352">MRIDVISLFPEFIKQSVGFGVIGRAQERGLLDLHNWNPRDYAQGNYRRVDDRPFGGGPGMVMLIEPLRACLEAVRAADPQPAPLIYLSPQGVLLNQSRARKLAMLPRMILLCGRYEGIDERFIAHEVNMELSIGDYVLSGGELGAAVVVDAVTRLQEGVLNDAESAKQDSFEAADSLFDYPHYTHPSNHAFGNVPEVLRSGNHVAITRWRRQQSLLRTWLRRPDLIDEARLSKADRLLLDEIKRTHPMDTDRKASASWRGA</sequence>
<accession>Q87F54</accession>
<organism>
    <name type="scientific">Xylella fastidiosa (strain Temecula1 / ATCC 700964)</name>
    <dbReference type="NCBI Taxonomy" id="183190"/>
    <lineage>
        <taxon>Bacteria</taxon>
        <taxon>Pseudomonadati</taxon>
        <taxon>Pseudomonadota</taxon>
        <taxon>Gammaproteobacteria</taxon>
        <taxon>Lysobacterales</taxon>
        <taxon>Lysobacteraceae</taxon>
        <taxon>Xylella</taxon>
    </lineage>
</organism>
<protein>
    <recommendedName>
        <fullName>tRNA (guanine-N(1)-)-methyltransferase</fullName>
        <ecNumber>2.1.1.228</ecNumber>
    </recommendedName>
    <alternativeName>
        <fullName>M1G-methyltransferase</fullName>
    </alternativeName>
    <alternativeName>
        <fullName>tRNA [GM37] methyltransferase</fullName>
    </alternativeName>
</protein>